<comment type="function">
    <text evidence="4">Involved in the catabolism of short chain fatty acids (SCFA) via the tricarboxylic acid (TCA)(acetyl degradation route) and via the 2-methylcitrate cycle I (propionate degradation route). Catalyzes the Claisen condensation of propionyl-CoA and oxaloacetate (OAA) to yield 2-methylcitrate (2-MC) and CoA. Also catalyzes the condensation of oxaloacetate with acetyl-CoA but with a lower efficiency.</text>
</comment>
<comment type="catalytic activity">
    <reaction evidence="4">
        <text>propanoyl-CoA + oxaloacetate + H2O = (2S,3S)-2-methylcitrate + CoA + H(+)</text>
        <dbReference type="Rhea" id="RHEA:23780"/>
        <dbReference type="ChEBI" id="CHEBI:15377"/>
        <dbReference type="ChEBI" id="CHEBI:15378"/>
        <dbReference type="ChEBI" id="CHEBI:16452"/>
        <dbReference type="ChEBI" id="CHEBI:57287"/>
        <dbReference type="ChEBI" id="CHEBI:57392"/>
        <dbReference type="ChEBI" id="CHEBI:58853"/>
        <dbReference type="EC" id="2.3.3.5"/>
    </reaction>
</comment>
<comment type="catalytic activity">
    <reaction evidence="4">
        <text>oxaloacetate + acetyl-CoA + H2O = citrate + CoA + H(+)</text>
        <dbReference type="Rhea" id="RHEA:16845"/>
        <dbReference type="ChEBI" id="CHEBI:15377"/>
        <dbReference type="ChEBI" id="CHEBI:15378"/>
        <dbReference type="ChEBI" id="CHEBI:16452"/>
        <dbReference type="ChEBI" id="CHEBI:16947"/>
        <dbReference type="ChEBI" id="CHEBI:57287"/>
        <dbReference type="ChEBI" id="CHEBI:57288"/>
        <dbReference type="EC" id="2.3.3.16"/>
    </reaction>
</comment>
<comment type="pathway">
    <text evidence="7">Organic acid metabolism; propanoate degradation.</text>
</comment>
<comment type="pathway">
    <text evidence="7">Carbohydrate metabolism; tricarboxylic acid cycle; isocitrate from oxaloacetate: step 1/2.</text>
</comment>
<comment type="subunit">
    <text evidence="3">Homodimer.</text>
</comment>
<comment type="induction">
    <text evidence="7">By propionate.</text>
</comment>
<comment type="similarity">
    <text evidence="6">Belongs to the citrate synthase family.</text>
</comment>
<accession>Q937N9</accession>
<sequence length="385" mass="42508">MSEAQPLVTPKPKKSVALSGVTAGNTALCTVGRTGNDLHYRGYDILDIAETCEFEEIAHLLVHGKLPTKSELAAYKAKLKSLRGLPANVKAALEWVPASAHPMDVMRTGVSVLGTVLPEKEDHNTPGARDIADRLMASLGSMLLYWYHYSHNGRRIEVETDDDSIGGHFLHLLHGEKPSALWERAMNTSLNLYAEHEFNASTFTARVIAGTGSDMYSSISGAIGALRGPKHGGANEVAFEIQKRYDNPDEAQADITRRVENKEVVIGFGHPVYTTGDPRNQVIKEVAKKLSKDAGSMKMFDIAEALETVMWDIKKMFPNLDWFSAVSYHMMGVPTAMFTALFVIARTSGWAAHIIEQRIDNKIIRQSANYTGPENLKFVPLKDRK</sequence>
<keyword id="KW-0808">Transferase</keyword>
<keyword id="KW-0816">Tricarboxylic acid cycle</keyword>
<reference key="1">
    <citation type="journal article" date="2001" name="Microbiology">
        <title>The methylcitric acid pathway in Ralstonia eutropha: new genes identified involved in propionate metabolism.</title>
        <authorList>
            <person name="Bramer C.O."/>
            <person name="Steinbuchel A."/>
        </authorList>
    </citation>
    <scope>NUCLEOTIDE SEQUENCE [GENOMIC DNA]</scope>
    <scope>FUNCTION</scope>
    <scope>CATALYTIC ACTIVITY</scope>
    <scope>SUBSTRATE SPECIFICITY</scope>
    <source>
        <strain>HF39</strain>
    </source>
</reference>
<dbReference type="EC" id="2.3.3.5" evidence="4"/>
<dbReference type="EC" id="2.3.3.16" evidence="4"/>
<dbReference type="EMBL" id="AF325554">
    <property type="protein sequence ID" value="AAL03989.1"/>
    <property type="molecule type" value="Genomic_DNA"/>
</dbReference>
<dbReference type="SMR" id="Q937N9"/>
<dbReference type="UniPathway" id="UPA00223">
    <property type="reaction ID" value="UER00717"/>
</dbReference>
<dbReference type="UniPathway" id="UPA00946"/>
<dbReference type="GO" id="GO:0005737">
    <property type="term" value="C:cytoplasm"/>
    <property type="evidence" value="ECO:0007669"/>
    <property type="project" value="InterPro"/>
</dbReference>
<dbReference type="GO" id="GO:0050440">
    <property type="term" value="F:2-methylcitrate synthase activity"/>
    <property type="evidence" value="ECO:0000314"/>
    <property type="project" value="UniProtKB"/>
</dbReference>
<dbReference type="GO" id="GO:0004108">
    <property type="term" value="F:citrate (Si)-synthase activity"/>
    <property type="evidence" value="ECO:0007669"/>
    <property type="project" value="TreeGrafter"/>
</dbReference>
<dbReference type="GO" id="GO:0036440">
    <property type="term" value="F:citrate synthase activity"/>
    <property type="evidence" value="ECO:0000314"/>
    <property type="project" value="UniProtKB"/>
</dbReference>
<dbReference type="GO" id="GO:0005975">
    <property type="term" value="P:carbohydrate metabolic process"/>
    <property type="evidence" value="ECO:0007669"/>
    <property type="project" value="TreeGrafter"/>
</dbReference>
<dbReference type="GO" id="GO:0019679">
    <property type="term" value="P:propionate metabolic process, methylcitrate cycle"/>
    <property type="evidence" value="ECO:0000314"/>
    <property type="project" value="UniProtKB"/>
</dbReference>
<dbReference type="GO" id="GO:0006099">
    <property type="term" value="P:tricarboxylic acid cycle"/>
    <property type="evidence" value="ECO:0007669"/>
    <property type="project" value="UniProtKB-UniPathway"/>
</dbReference>
<dbReference type="CDD" id="cd06117">
    <property type="entry name" value="Ec2MCS_like_1"/>
    <property type="match status" value="1"/>
</dbReference>
<dbReference type="FunFam" id="1.10.230.10:FF:000003">
    <property type="entry name" value="Citrate synthase"/>
    <property type="match status" value="1"/>
</dbReference>
<dbReference type="FunFam" id="1.10.580.10:FF:000004">
    <property type="entry name" value="Citrate synthase"/>
    <property type="match status" value="1"/>
</dbReference>
<dbReference type="Gene3D" id="1.10.580.10">
    <property type="entry name" value="Citrate Synthase, domain 1"/>
    <property type="match status" value="1"/>
</dbReference>
<dbReference type="Gene3D" id="1.10.230.10">
    <property type="entry name" value="Cytochrome P450-Terp, domain 2"/>
    <property type="match status" value="1"/>
</dbReference>
<dbReference type="InterPro" id="IPR011278">
    <property type="entry name" value="2-MeCitrate/Citrate_synth_II"/>
</dbReference>
<dbReference type="InterPro" id="IPR016142">
    <property type="entry name" value="Citrate_synth-like_lrg_a-sub"/>
</dbReference>
<dbReference type="InterPro" id="IPR016143">
    <property type="entry name" value="Citrate_synth-like_sm_a-sub"/>
</dbReference>
<dbReference type="InterPro" id="IPR002020">
    <property type="entry name" value="Citrate_synthase"/>
</dbReference>
<dbReference type="InterPro" id="IPR019810">
    <property type="entry name" value="Citrate_synthase_AS"/>
</dbReference>
<dbReference type="InterPro" id="IPR024176">
    <property type="entry name" value="Citrate_synthase_bac-typ"/>
</dbReference>
<dbReference type="InterPro" id="IPR036969">
    <property type="entry name" value="Citrate_synthase_sf"/>
</dbReference>
<dbReference type="NCBIfam" id="TIGR01800">
    <property type="entry name" value="cit_synth_II"/>
    <property type="match status" value="1"/>
</dbReference>
<dbReference type="NCBIfam" id="NF009006">
    <property type="entry name" value="PRK12351.1"/>
    <property type="match status" value="1"/>
</dbReference>
<dbReference type="PANTHER" id="PTHR11739">
    <property type="entry name" value="CITRATE SYNTHASE"/>
    <property type="match status" value="1"/>
</dbReference>
<dbReference type="PANTHER" id="PTHR11739:SF25">
    <property type="entry name" value="CITRATE SYNTHASE-RELATED PROTEIN DDB_G0287281"/>
    <property type="match status" value="1"/>
</dbReference>
<dbReference type="Pfam" id="PF00285">
    <property type="entry name" value="Citrate_synt"/>
    <property type="match status" value="1"/>
</dbReference>
<dbReference type="PIRSF" id="PIRSF001369">
    <property type="entry name" value="Citrate_synth"/>
    <property type="match status" value="1"/>
</dbReference>
<dbReference type="PRINTS" id="PR00143">
    <property type="entry name" value="CITRTSNTHASE"/>
</dbReference>
<dbReference type="SUPFAM" id="SSF48256">
    <property type="entry name" value="Citrate synthase"/>
    <property type="match status" value="1"/>
</dbReference>
<dbReference type="PROSITE" id="PS00480">
    <property type="entry name" value="CITRATE_SYNTHASE"/>
    <property type="match status" value="1"/>
</dbReference>
<organism>
    <name type="scientific">Cupriavidus necator</name>
    <name type="common">Alcaligenes eutrophus</name>
    <name type="synonym">Ralstonia eutropha</name>
    <dbReference type="NCBI Taxonomy" id="106590"/>
    <lineage>
        <taxon>Bacteria</taxon>
        <taxon>Pseudomonadati</taxon>
        <taxon>Pseudomonadota</taxon>
        <taxon>Betaproteobacteria</taxon>
        <taxon>Burkholderiales</taxon>
        <taxon>Burkholderiaceae</taxon>
        <taxon>Cupriavidus</taxon>
    </lineage>
</organism>
<evidence type="ECO:0000250" key="1">
    <source>
        <dbReference type="UniProtKB" id="I6Y9Q3"/>
    </source>
</evidence>
<evidence type="ECO:0000250" key="2">
    <source>
        <dbReference type="UniProtKB" id="O34002"/>
    </source>
</evidence>
<evidence type="ECO:0000250" key="3">
    <source>
        <dbReference type="UniProtKB" id="P31660"/>
    </source>
</evidence>
<evidence type="ECO:0000269" key="4">
    <source>
    </source>
</evidence>
<evidence type="ECO:0000303" key="5">
    <source>
    </source>
</evidence>
<evidence type="ECO:0000305" key="6"/>
<evidence type="ECO:0000305" key="7">
    <source>
    </source>
</evidence>
<protein>
    <recommendedName>
        <fullName evidence="5">2-methylcitrate synthase</fullName>
        <shortName evidence="5">2-MCS</shortName>
        <shortName evidence="5">MCS</shortName>
        <ecNumber evidence="4">2.3.3.5</ecNumber>
    </recommendedName>
    <alternativeName>
        <fullName evidence="5">Citrate synthase</fullName>
        <ecNumber evidence="4">2.3.3.16</ecNumber>
    </alternativeName>
</protein>
<name>PRPC_CUPNE</name>
<feature type="chain" id="PRO_0000432968" description="2-methylcitrate synthase">
    <location>
        <begin position="1"/>
        <end position="385"/>
    </location>
</feature>
<feature type="active site" evidence="2">
    <location>
        <position position="231"/>
    </location>
</feature>
<feature type="active site" evidence="2">
    <location>
        <position position="270"/>
    </location>
</feature>
<feature type="active site" evidence="2">
    <location>
        <position position="321"/>
    </location>
</feature>
<feature type="binding site" evidence="1">
    <location>
        <position position="78"/>
    </location>
    <ligand>
        <name>substrate</name>
    </ligand>
</feature>
<feature type="binding site" evidence="1">
    <location>
        <position position="196"/>
    </location>
    <ligand>
        <name>substrate</name>
    </ligand>
</feature>
<feature type="binding site" evidence="2">
    <location>
        <begin position="264"/>
        <end position="268"/>
    </location>
    <ligand>
        <name>CoA</name>
        <dbReference type="ChEBI" id="CHEBI:57287"/>
    </ligand>
</feature>
<feature type="binding site" evidence="1">
    <location>
        <position position="279"/>
    </location>
    <ligand>
        <name>substrate</name>
    </ligand>
</feature>
<feature type="binding site" evidence="1">
    <location>
        <position position="346"/>
    </location>
    <ligand>
        <name>substrate</name>
    </ligand>
</feature>
<feature type="binding site" evidence="1">
    <location>
        <position position="365"/>
    </location>
    <ligand>
        <name>substrate</name>
    </ligand>
</feature>
<gene>
    <name evidence="5" type="primary">prpC</name>
</gene>
<proteinExistence type="evidence at protein level"/>